<proteinExistence type="inferred from homology"/>
<dbReference type="EMBL" id="CP000468">
    <property type="protein sequence ID" value="ABJ03745.1"/>
    <property type="molecule type" value="Genomic_DNA"/>
</dbReference>
<dbReference type="RefSeq" id="WP_001216676.1">
    <property type="nucleotide sequence ID" value="NZ_CADILS010000035.1"/>
</dbReference>
<dbReference type="SMR" id="A1AJA5"/>
<dbReference type="GeneID" id="93777623"/>
<dbReference type="KEGG" id="ecv:APECO1_2192"/>
<dbReference type="HOGENOM" id="CLU_113441_6_1_6"/>
<dbReference type="Proteomes" id="UP000008216">
    <property type="component" value="Chromosome"/>
</dbReference>
<dbReference type="GO" id="GO:0022627">
    <property type="term" value="C:cytosolic small ribosomal subunit"/>
    <property type="evidence" value="ECO:0007669"/>
    <property type="project" value="TreeGrafter"/>
</dbReference>
<dbReference type="GO" id="GO:0070181">
    <property type="term" value="F:small ribosomal subunit rRNA binding"/>
    <property type="evidence" value="ECO:0007669"/>
    <property type="project" value="TreeGrafter"/>
</dbReference>
<dbReference type="GO" id="GO:0003735">
    <property type="term" value="F:structural constituent of ribosome"/>
    <property type="evidence" value="ECO:0007669"/>
    <property type="project" value="InterPro"/>
</dbReference>
<dbReference type="GO" id="GO:0006412">
    <property type="term" value="P:translation"/>
    <property type="evidence" value="ECO:0007669"/>
    <property type="project" value="UniProtKB-UniRule"/>
</dbReference>
<dbReference type="CDD" id="cd00473">
    <property type="entry name" value="bS6"/>
    <property type="match status" value="1"/>
</dbReference>
<dbReference type="FunFam" id="3.30.70.60:FF:000003">
    <property type="entry name" value="30S ribosomal protein S6"/>
    <property type="match status" value="1"/>
</dbReference>
<dbReference type="Gene3D" id="3.30.70.60">
    <property type="match status" value="1"/>
</dbReference>
<dbReference type="HAMAP" id="MF_00360">
    <property type="entry name" value="Ribosomal_bS6"/>
    <property type="match status" value="1"/>
</dbReference>
<dbReference type="InterPro" id="IPR000529">
    <property type="entry name" value="Ribosomal_bS6"/>
</dbReference>
<dbReference type="InterPro" id="IPR020815">
    <property type="entry name" value="Ribosomal_bS6_CS"/>
</dbReference>
<dbReference type="InterPro" id="IPR035980">
    <property type="entry name" value="Ribosomal_bS6_sf"/>
</dbReference>
<dbReference type="InterPro" id="IPR020814">
    <property type="entry name" value="Ribosomal_S6_plastid/chlpt"/>
</dbReference>
<dbReference type="InterPro" id="IPR014717">
    <property type="entry name" value="Transl_elong_EF1B/ribsomal_bS6"/>
</dbReference>
<dbReference type="NCBIfam" id="TIGR00166">
    <property type="entry name" value="S6"/>
    <property type="match status" value="1"/>
</dbReference>
<dbReference type="PANTHER" id="PTHR21011">
    <property type="entry name" value="MITOCHONDRIAL 28S RIBOSOMAL PROTEIN S6"/>
    <property type="match status" value="1"/>
</dbReference>
<dbReference type="PANTHER" id="PTHR21011:SF1">
    <property type="entry name" value="SMALL RIBOSOMAL SUBUNIT PROTEIN BS6M"/>
    <property type="match status" value="1"/>
</dbReference>
<dbReference type="Pfam" id="PF01250">
    <property type="entry name" value="Ribosomal_S6"/>
    <property type="match status" value="1"/>
</dbReference>
<dbReference type="SUPFAM" id="SSF54995">
    <property type="entry name" value="Ribosomal protein S6"/>
    <property type="match status" value="1"/>
</dbReference>
<dbReference type="PROSITE" id="PS01048">
    <property type="entry name" value="RIBOSOMAL_S6"/>
    <property type="match status" value="1"/>
</dbReference>
<organism>
    <name type="scientific">Escherichia coli O1:K1 / APEC</name>
    <dbReference type="NCBI Taxonomy" id="405955"/>
    <lineage>
        <taxon>Bacteria</taxon>
        <taxon>Pseudomonadati</taxon>
        <taxon>Pseudomonadota</taxon>
        <taxon>Gammaproteobacteria</taxon>
        <taxon>Enterobacterales</taxon>
        <taxon>Enterobacteriaceae</taxon>
        <taxon>Escherichia</taxon>
    </lineage>
</organism>
<feature type="chain" id="PRO_1000005258" description="Small ribosomal subunit protein bS6">
    <location>
        <begin position="1"/>
        <end position="131"/>
    </location>
</feature>
<feature type="region of interest" description="Disordered" evidence="2">
    <location>
        <begin position="98"/>
        <end position="131"/>
    </location>
</feature>
<feature type="compositionally biased region" description="Basic and acidic residues" evidence="2">
    <location>
        <begin position="104"/>
        <end position="116"/>
    </location>
</feature>
<feature type="compositionally biased region" description="Acidic residues" evidence="2">
    <location>
        <begin position="120"/>
        <end position="131"/>
    </location>
</feature>
<feature type="modified residue" description="N6-acetyllysine" evidence="1">
    <location>
        <position position="93"/>
    </location>
</feature>
<reference key="1">
    <citation type="journal article" date="2007" name="J. Bacteriol.">
        <title>The genome sequence of avian pathogenic Escherichia coli strain O1:K1:H7 shares strong similarities with human extraintestinal pathogenic E. coli genomes.</title>
        <authorList>
            <person name="Johnson T.J."/>
            <person name="Kariyawasam S."/>
            <person name="Wannemuehler Y."/>
            <person name="Mangiamele P."/>
            <person name="Johnson S.J."/>
            <person name="Doetkott C."/>
            <person name="Skyberg J.A."/>
            <person name="Lynne A.M."/>
            <person name="Johnson J.R."/>
            <person name="Nolan L.K."/>
        </authorList>
    </citation>
    <scope>NUCLEOTIDE SEQUENCE [LARGE SCALE GENOMIC DNA]</scope>
</reference>
<evidence type="ECO:0000255" key="1">
    <source>
        <dbReference type="HAMAP-Rule" id="MF_00360"/>
    </source>
</evidence>
<evidence type="ECO:0000256" key="2">
    <source>
        <dbReference type="SAM" id="MobiDB-lite"/>
    </source>
</evidence>
<evidence type="ECO:0000305" key="3"/>
<protein>
    <recommendedName>
        <fullName evidence="1">Small ribosomal subunit protein bS6</fullName>
    </recommendedName>
    <alternativeName>
        <fullName evidence="3">30S ribosomal protein S6</fullName>
    </alternativeName>
</protein>
<name>RS6_ECOK1</name>
<sequence>MRHYEIVFMVHPDQSEQVPGMIERYTAAITGAEGKIHRLEDWGRRQLAYPINKLHKAHYVLMNVEAPQEVIDELETTFRFNDAVIRSMVMRTKHAVTEASPMVKAKDERRERRDDFANETADDAEAGDSEE</sequence>
<gene>
    <name evidence="1" type="primary">rpsF</name>
    <name type="ordered locus">Ecok1_42510</name>
    <name type="ORF">APECO1_2192</name>
</gene>
<keyword id="KW-0007">Acetylation</keyword>
<keyword id="KW-1185">Reference proteome</keyword>
<keyword id="KW-0687">Ribonucleoprotein</keyword>
<keyword id="KW-0689">Ribosomal protein</keyword>
<keyword id="KW-0694">RNA-binding</keyword>
<keyword id="KW-0699">rRNA-binding</keyword>
<accession>A1AJA5</accession>
<comment type="function">
    <text evidence="1">Binds together with bS18 to 16S ribosomal RNA.</text>
</comment>
<comment type="similarity">
    <text evidence="1">Belongs to the bacterial ribosomal protein bS6 family.</text>
</comment>